<accession>Q87QD4</accession>
<proteinExistence type="inferred from homology"/>
<comment type="function">
    <text evidence="1">Responsible for synthesis of pseudouridine from uracil-516 in 16S ribosomal RNA.</text>
</comment>
<comment type="catalytic activity">
    <reaction>
        <text>uridine(516) in 16S rRNA = pseudouridine(516) in 16S rRNA</text>
        <dbReference type="Rhea" id="RHEA:38867"/>
        <dbReference type="Rhea" id="RHEA-COMP:10089"/>
        <dbReference type="Rhea" id="RHEA-COMP:10090"/>
        <dbReference type="ChEBI" id="CHEBI:65314"/>
        <dbReference type="ChEBI" id="CHEBI:65315"/>
        <dbReference type="EC" id="5.4.99.19"/>
    </reaction>
</comment>
<comment type="similarity">
    <text evidence="3">Belongs to the pseudouridine synthase RsuA family.</text>
</comment>
<dbReference type="EC" id="5.4.99.19"/>
<dbReference type="EMBL" id="BA000031">
    <property type="protein sequence ID" value="BAC59478.1"/>
    <property type="molecule type" value="Genomic_DNA"/>
</dbReference>
<dbReference type="RefSeq" id="NP_797594.1">
    <property type="nucleotide sequence ID" value="NC_004603.1"/>
</dbReference>
<dbReference type="RefSeq" id="WP_005462415.1">
    <property type="nucleotide sequence ID" value="NC_004603.1"/>
</dbReference>
<dbReference type="SMR" id="Q87QD4"/>
<dbReference type="GeneID" id="1188720"/>
<dbReference type="KEGG" id="vpa:VP1215"/>
<dbReference type="PATRIC" id="fig|223926.6.peg.1155"/>
<dbReference type="eggNOG" id="COG1187">
    <property type="taxonomic scope" value="Bacteria"/>
</dbReference>
<dbReference type="HOGENOM" id="CLU_024979_1_2_6"/>
<dbReference type="Proteomes" id="UP000002493">
    <property type="component" value="Chromosome 1"/>
</dbReference>
<dbReference type="GO" id="GO:0160136">
    <property type="term" value="F:16S rRNA pseudouridine(516) synthase activity"/>
    <property type="evidence" value="ECO:0007669"/>
    <property type="project" value="UniProtKB-EC"/>
</dbReference>
<dbReference type="GO" id="GO:0003723">
    <property type="term" value="F:RNA binding"/>
    <property type="evidence" value="ECO:0007669"/>
    <property type="project" value="UniProtKB-KW"/>
</dbReference>
<dbReference type="GO" id="GO:0000455">
    <property type="term" value="P:enzyme-directed rRNA pseudouridine synthesis"/>
    <property type="evidence" value="ECO:0007669"/>
    <property type="project" value="UniProtKB-ARBA"/>
</dbReference>
<dbReference type="CDD" id="cd02553">
    <property type="entry name" value="PseudoU_synth_RsuA"/>
    <property type="match status" value="1"/>
</dbReference>
<dbReference type="CDD" id="cd00165">
    <property type="entry name" value="S4"/>
    <property type="match status" value="1"/>
</dbReference>
<dbReference type="FunFam" id="3.30.70.1560:FF:000001">
    <property type="entry name" value="Pseudouridine synthase"/>
    <property type="match status" value="1"/>
</dbReference>
<dbReference type="Gene3D" id="3.30.70.1560">
    <property type="entry name" value="Alpha-L RNA-binding motif"/>
    <property type="match status" value="1"/>
</dbReference>
<dbReference type="Gene3D" id="3.30.70.580">
    <property type="entry name" value="Pseudouridine synthase I, catalytic domain, N-terminal subdomain"/>
    <property type="match status" value="1"/>
</dbReference>
<dbReference type="Gene3D" id="3.10.290.10">
    <property type="entry name" value="RNA-binding S4 domain"/>
    <property type="match status" value="1"/>
</dbReference>
<dbReference type="InterPro" id="IPR042092">
    <property type="entry name" value="PsdUridine_s_RsuA/RluB/E/F_cat"/>
</dbReference>
<dbReference type="InterPro" id="IPR020103">
    <property type="entry name" value="PsdUridine_synth_cat_dom_sf"/>
</dbReference>
<dbReference type="InterPro" id="IPR006145">
    <property type="entry name" value="PsdUridine_synth_RsuA/RluA"/>
</dbReference>
<dbReference type="InterPro" id="IPR000748">
    <property type="entry name" value="PsdUridine_synth_RsuA/RluB/E/F"/>
</dbReference>
<dbReference type="InterPro" id="IPR018496">
    <property type="entry name" value="PsdUridine_synth_RsuA/RluB_CS"/>
</dbReference>
<dbReference type="InterPro" id="IPR050343">
    <property type="entry name" value="RsuA_PseudoU_synthase"/>
</dbReference>
<dbReference type="InterPro" id="IPR002942">
    <property type="entry name" value="S4_RNA-bd"/>
</dbReference>
<dbReference type="InterPro" id="IPR036986">
    <property type="entry name" value="S4_RNA-bd_sf"/>
</dbReference>
<dbReference type="InterPro" id="IPR020094">
    <property type="entry name" value="TruA/RsuA/RluB/E/F_N"/>
</dbReference>
<dbReference type="NCBIfam" id="NF008097">
    <property type="entry name" value="PRK10839.1"/>
    <property type="match status" value="1"/>
</dbReference>
<dbReference type="NCBIfam" id="TIGR00093">
    <property type="entry name" value="pseudouridine synthase"/>
    <property type="match status" value="1"/>
</dbReference>
<dbReference type="PANTHER" id="PTHR47683:SF4">
    <property type="entry name" value="PSEUDOURIDINE SYNTHASE"/>
    <property type="match status" value="1"/>
</dbReference>
<dbReference type="PANTHER" id="PTHR47683">
    <property type="entry name" value="PSEUDOURIDINE SYNTHASE FAMILY PROTEIN-RELATED"/>
    <property type="match status" value="1"/>
</dbReference>
<dbReference type="Pfam" id="PF00849">
    <property type="entry name" value="PseudoU_synth_2"/>
    <property type="match status" value="1"/>
</dbReference>
<dbReference type="Pfam" id="PF01479">
    <property type="entry name" value="S4"/>
    <property type="match status" value="1"/>
</dbReference>
<dbReference type="SMART" id="SM00363">
    <property type="entry name" value="S4"/>
    <property type="match status" value="1"/>
</dbReference>
<dbReference type="SUPFAM" id="SSF55174">
    <property type="entry name" value="Alpha-L RNA-binding motif"/>
    <property type="match status" value="1"/>
</dbReference>
<dbReference type="SUPFAM" id="SSF55120">
    <property type="entry name" value="Pseudouridine synthase"/>
    <property type="match status" value="1"/>
</dbReference>
<dbReference type="PROSITE" id="PS01149">
    <property type="entry name" value="PSI_RSU"/>
    <property type="match status" value="1"/>
</dbReference>
<dbReference type="PROSITE" id="PS50889">
    <property type="entry name" value="S4"/>
    <property type="match status" value="1"/>
</dbReference>
<keyword id="KW-0413">Isomerase</keyword>
<keyword id="KW-0694">RNA-binding</keyword>
<keyword id="KW-0698">rRNA processing</keyword>
<name>RSUA_VIBPA</name>
<sequence length="233" mass="26382">MRLDKYLCDALGATRKQATKIIKSGEVLVDGEVQKSGSFKVPEGGVVEWDGREVGAPGPRYIMLYKPADFVCSHEDGYNPTAFVLLDEPKVENLHFAGRLDVDTTGLVLITDDGQWSHRITSPKHKCKKTYRVWLADAIQPDYVEKFAQGIELRNEREATLPAHLEIVNEAENEVLLTIVEGKYHQVKRMFAALGNKVELLHRERIGDIVLDDTLEPGDYRYLTQEEVDSVWN</sequence>
<organism>
    <name type="scientific">Vibrio parahaemolyticus serotype O3:K6 (strain RIMD 2210633)</name>
    <dbReference type="NCBI Taxonomy" id="223926"/>
    <lineage>
        <taxon>Bacteria</taxon>
        <taxon>Pseudomonadati</taxon>
        <taxon>Pseudomonadota</taxon>
        <taxon>Gammaproteobacteria</taxon>
        <taxon>Vibrionales</taxon>
        <taxon>Vibrionaceae</taxon>
        <taxon>Vibrio</taxon>
    </lineage>
</organism>
<feature type="chain" id="PRO_0000099976" description="Ribosomal small subunit pseudouridine synthase A">
    <location>
        <begin position="1"/>
        <end position="233"/>
    </location>
</feature>
<feature type="domain" description="S4 RNA-binding" evidence="2">
    <location>
        <begin position="1"/>
        <end position="67"/>
    </location>
</feature>
<feature type="active site" description="Nucleophile" evidence="1">
    <location>
        <position position="101"/>
    </location>
</feature>
<evidence type="ECO:0000250" key="1"/>
<evidence type="ECO:0000255" key="2">
    <source>
        <dbReference type="PROSITE-ProRule" id="PRU00182"/>
    </source>
</evidence>
<evidence type="ECO:0000305" key="3"/>
<gene>
    <name type="primary">rsuA</name>
    <name type="ordered locus">VP1215</name>
</gene>
<reference key="1">
    <citation type="journal article" date="2003" name="Lancet">
        <title>Genome sequence of Vibrio parahaemolyticus: a pathogenic mechanism distinct from that of V. cholerae.</title>
        <authorList>
            <person name="Makino K."/>
            <person name="Oshima K."/>
            <person name="Kurokawa K."/>
            <person name="Yokoyama K."/>
            <person name="Uda T."/>
            <person name="Tagomori K."/>
            <person name="Iijima Y."/>
            <person name="Najima M."/>
            <person name="Nakano M."/>
            <person name="Yamashita A."/>
            <person name="Kubota Y."/>
            <person name="Kimura S."/>
            <person name="Yasunaga T."/>
            <person name="Honda T."/>
            <person name="Shinagawa H."/>
            <person name="Hattori M."/>
            <person name="Iida T."/>
        </authorList>
    </citation>
    <scope>NUCLEOTIDE SEQUENCE [LARGE SCALE GENOMIC DNA]</scope>
    <source>
        <strain>RIMD 2210633</strain>
    </source>
</reference>
<protein>
    <recommendedName>
        <fullName>Ribosomal small subunit pseudouridine synthase A</fullName>
        <ecNumber>5.4.99.19</ecNumber>
    </recommendedName>
    <alternativeName>
        <fullName>16S pseudouridylate 516 synthase</fullName>
    </alternativeName>
    <alternativeName>
        <fullName>16S rRNA pseudouridine(516) synthase</fullName>
    </alternativeName>
    <alternativeName>
        <fullName>rRNA pseudouridylate synthase A</fullName>
    </alternativeName>
    <alternativeName>
        <fullName>rRNA-uridine isomerase A</fullName>
    </alternativeName>
</protein>